<proteinExistence type="evidence at protein level"/>
<comment type="function">
    <text evidence="4">Electron carrier protein.</text>
</comment>
<comment type="subcellular location">
    <subcellularLocation>
        <location evidence="1 4">Cell membrane</location>
        <topology evidence="1 4">Lipid-anchor</topology>
    </subcellularLocation>
</comment>
<comment type="induction">
    <text evidence="4">Induced during exponential growth. Repressed by glucose.</text>
</comment>
<comment type="PTM">
    <text>Binds 1 heme c group covalently per subunit.</text>
</comment>
<comment type="miscellaneous">
    <text>Present in very low amounts in the cell.</text>
</comment>
<accession>O34594</accession>
<accession>Q795D5</accession>
<gene>
    <name type="primary">cccB</name>
    <name type="ordered locus">BSU35270</name>
</gene>
<protein>
    <recommendedName>
        <fullName>Cytochrome c-551</fullName>
    </recommendedName>
    <alternativeName>
        <fullName>Cytochrome c B</fullName>
    </alternativeName>
    <alternativeName>
        <fullName>Cytochrome c551</fullName>
    </alternativeName>
</protein>
<feature type="signal peptide" evidence="1">
    <location>
        <begin position="1"/>
        <end position="20"/>
    </location>
</feature>
<feature type="chain" id="PRO_0000361666" description="Cytochrome c-551">
    <location>
        <begin position="21"/>
        <end position="112"/>
    </location>
</feature>
<feature type="domain" description="Cytochrome c" evidence="2">
    <location>
        <begin position="39"/>
        <end position="112"/>
    </location>
</feature>
<feature type="region of interest" description="Disordered" evidence="3">
    <location>
        <begin position="25"/>
        <end position="44"/>
    </location>
</feature>
<feature type="compositionally biased region" description="Basic and acidic residues" evidence="3">
    <location>
        <begin position="25"/>
        <end position="35"/>
    </location>
</feature>
<feature type="binding site" description="covalent" evidence="2">
    <location>
        <position position="52"/>
    </location>
    <ligand>
        <name>heme c</name>
        <dbReference type="ChEBI" id="CHEBI:61717"/>
    </ligand>
</feature>
<feature type="binding site" description="covalent" evidence="2">
    <location>
        <position position="55"/>
    </location>
    <ligand>
        <name>heme c</name>
        <dbReference type="ChEBI" id="CHEBI:61717"/>
    </ligand>
</feature>
<feature type="binding site" description="axial binding residue" evidence="2">
    <location>
        <position position="56"/>
    </location>
    <ligand>
        <name>heme c</name>
        <dbReference type="ChEBI" id="CHEBI:61717"/>
    </ligand>
    <ligandPart>
        <name>Fe</name>
        <dbReference type="ChEBI" id="CHEBI:18248"/>
    </ligandPart>
</feature>
<feature type="binding site" description="axial binding residue" evidence="2">
    <location>
        <position position="91"/>
    </location>
    <ligand>
        <name>heme c</name>
        <dbReference type="ChEBI" id="CHEBI:61717"/>
    </ligand>
    <ligandPart>
        <name>Fe</name>
        <dbReference type="ChEBI" id="CHEBI:18248"/>
    </ligandPart>
</feature>
<feature type="lipid moiety-binding region" description="N-palmitoyl cysteine" evidence="1">
    <location>
        <position position="21"/>
    </location>
</feature>
<feature type="lipid moiety-binding region" description="S-diacylglycerol cysteine" evidence="1">
    <location>
        <position position="21"/>
    </location>
</feature>
<evidence type="ECO:0000255" key="1">
    <source>
        <dbReference type="PROSITE-ProRule" id="PRU00303"/>
    </source>
</evidence>
<evidence type="ECO:0000255" key="2">
    <source>
        <dbReference type="PROSITE-ProRule" id="PRU00433"/>
    </source>
</evidence>
<evidence type="ECO:0000256" key="3">
    <source>
        <dbReference type="SAM" id="MobiDB-lite"/>
    </source>
</evidence>
<evidence type="ECO:0000269" key="4">
    <source>
    </source>
</evidence>
<dbReference type="EMBL" id="AF017113">
    <property type="protein sequence ID" value="AAC67261.1"/>
    <property type="molecule type" value="Genomic_DNA"/>
</dbReference>
<dbReference type="EMBL" id="AL009126">
    <property type="protein sequence ID" value="CAB15544.1"/>
    <property type="molecule type" value="Genomic_DNA"/>
</dbReference>
<dbReference type="PIR" id="C69597">
    <property type="entry name" value="C69597"/>
</dbReference>
<dbReference type="RefSeq" id="NP_391407.1">
    <property type="nucleotide sequence ID" value="NC_000964.3"/>
</dbReference>
<dbReference type="RefSeq" id="WP_003242725.1">
    <property type="nucleotide sequence ID" value="NZ_OZ025638.1"/>
</dbReference>
<dbReference type="SMR" id="O34594"/>
<dbReference type="FunCoup" id="O34594">
    <property type="interactions" value="7"/>
</dbReference>
<dbReference type="STRING" id="224308.BSU35270"/>
<dbReference type="jPOST" id="O34594"/>
<dbReference type="PaxDb" id="224308-BSU35270"/>
<dbReference type="EnsemblBacteria" id="CAB15544">
    <property type="protein sequence ID" value="CAB15544"/>
    <property type="gene ID" value="BSU_35270"/>
</dbReference>
<dbReference type="GeneID" id="936703"/>
<dbReference type="KEGG" id="bsu:BSU35270"/>
<dbReference type="PATRIC" id="fig|224308.179.peg.3817"/>
<dbReference type="eggNOG" id="COG2010">
    <property type="taxonomic scope" value="Bacteria"/>
</dbReference>
<dbReference type="InParanoid" id="O34594"/>
<dbReference type="OrthoDB" id="7933886at2"/>
<dbReference type="PhylomeDB" id="O34594"/>
<dbReference type="BioCyc" id="BSUB:BSU35270-MONOMER"/>
<dbReference type="BioCyc" id="MetaCyc:BSU35270-MONOMER"/>
<dbReference type="Proteomes" id="UP000001570">
    <property type="component" value="Chromosome"/>
</dbReference>
<dbReference type="GO" id="GO:0005886">
    <property type="term" value="C:plasma membrane"/>
    <property type="evidence" value="ECO:0007669"/>
    <property type="project" value="UniProtKB-SubCell"/>
</dbReference>
<dbReference type="GO" id="GO:0009055">
    <property type="term" value="F:electron transfer activity"/>
    <property type="evidence" value="ECO:0007669"/>
    <property type="project" value="InterPro"/>
</dbReference>
<dbReference type="GO" id="GO:0020037">
    <property type="term" value="F:heme binding"/>
    <property type="evidence" value="ECO:0007669"/>
    <property type="project" value="InterPro"/>
</dbReference>
<dbReference type="GO" id="GO:0005506">
    <property type="term" value="F:iron ion binding"/>
    <property type="evidence" value="ECO:0007669"/>
    <property type="project" value="InterPro"/>
</dbReference>
<dbReference type="Gene3D" id="1.10.760.10">
    <property type="entry name" value="Cytochrome c-like domain"/>
    <property type="match status" value="1"/>
</dbReference>
<dbReference type="InterPro" id="IPR009056">
    <property type="entry name" value="Cyt_c-like_dom"/>
</dbReference>
<dbReference type="InterPro" id="IPR036909">
    <property type="entry name" value="Cyt_c-like_dom_sf"/>
</dbReference>
<dbReference type="InterPro" id="IPR012218">
    <property type="entry name" value="Cyt_c_BACSU-c550-type"/>
</dbReference>
<dbReference type="InterPro" id="IPR054782">
    <property type="entry name" value="Cytochro_C551"/>
</dbReference>
<dbReference type="InterPro" id="IPR051811">
    <property type="entry name" value="Cytochrome_c550/c551-like"/>
</dbReference>
<dbReference type="NCBIfam" id="NF045774">
    <property type="entry name" value="cytochro_C551"/>
    <property type="match status" value="1"/>
</dbReference>
<dbReference type="PANTHER" id="PTHR37823:SF3">
    <property type="entry name" value="CYTOCHROME C-551"/>
    <property type="match status" value="1"/>
</dbReference>
<dbReference type="PANTHER" id="PTHR37823">
    <property type="entry name" value="CYTOCHROME C-553-LIKE"/>
    <property type="match status" value="1"/>
</dbReference>
<dbReference type="Pfam" id="PF13442">
    <property type="entry name" value="Cytochrome_CBB3"/>
    <property type="match status" value="1"/>
</dbReference>
<dbReference type="PIRSF" id="PIRSF000025">
    <property type="entry name" value="Cytc_Bsub_c550"/>
    <property type="match status" value="1"/>
</dbReference>
<dbReference type="SUPFAM" id="SSF46626">
    <property type="entry name" value="Cytochrome c"/>
    <property type="match status" value="1"/>
</dbReference>
<dbReference type="PROSITE" id="PS51007">
    <property type="entry name" value="CYTC"/>
    <property type="match status" value="1"/>
</dbReference>
<dbReference type="PROSITE" id="PS51257">
    <property type="entry name" value="PROKAR_LIPOPROTEIN"/>
    <property type="match status" value="1"/>
</dbReference>
<organism>
    <name type="scientific">Bacillus subtilis (strain 168)</name>
    <dbReference type="NCBI Taxonomy" id="224308"/>
    <lineage>
        <taxon>Bacteria</taxon>
        <taxon>Bacillati</taxon>
        <taxon>Bacillota</taxon>
        <taxon>Bacilli</taxon>
        <taxon>Bacillales</taxon>
        <taxon>Bacillaceae</taxon>
        <taxon>Bacillus</taxon>
    </lineage>
</organism>
<reference key="1">
    <citation type="submission" date="1997-08" db="EMBL/GenBank/DDBJ databases">
        <title>Nucleotide sequence of the 300-304 chromosomal segment of Bacillus subtilis.</title>
        <authorList>
            <person name="Lazarevic V."/>
            <person name="Soldo B."/>
            <person name="Rivolta C."/>
            <person name="Reynolds S."/>
            <person name="Mauel C."/>
            <person name="Karamata D."/>
        </authorList>
    </citation>
    <scope>NUCLEOTIDE SEQUENCE [GENOMIC DNA]</scope>
</reference>
<reference key="2">
    <citation type="journal article" date="1997" name="Nature">
        <title>The complete genome sequence of the Gram-positive bacterium Bacillus subtilis.</title>
        <authorList>
            <person name="Kunst F."/>
            <person name="Ogasawara N."/>
            <person name="Moszer I."/>
            <person name="Albertini A.M."/>
            <person name="Alloni G."/>
            <person name="Azevedo V."/>
            <person name="Bertero M.G."/>
            <person name="Bessieres P."/>
            <person name="Bolotin A."/>
            <person name="Borchert S."/>
            <person name="Borriss R."/>
            <person name="Boursier L."/>
            <person name="Brans A."/>
            <person name="Braun M."/>
            <person name="Brignell S.C."/>
            <person name="Bron S."/>
            <person name="Brouillet S."/>
            <person name="Bruschi C.V."/>
            <person name="Caldwell B."/>
            <person name="Capuano V."/>
            <person name="Carter N.M."/>
            <person name="Choi S.-K."/>
            <person name="Codani J.-J."/>
            <person name="Connerton I.F."/>
            <person name="Cummings N.J."/>
            <person name="Daniel R.A."/>
            <person name="Denizot F."/>
            <person name="Devine K.M."/>
            <person name="Duesterhoeft A."/>
            <person name="Ehrlich S.D."/>
            <person name="Emmerson P.T."/>
            <person name="Entian K.-D."/>
            <person name="Errington J."/>
            <person name="Fabret C."/>
            <person name="Ferrari E."/>
            <person name="Foulger D."/>
            <person name="Fritz C."/>
            <person name="Fujita M."/>
            <person name="Fujita Y."/>
            <person name="Fuma S."/>
            <person name="Galizzi A."/>
            <person name="Galleron N."/>
            <person name="Ghim S.-Y."/>
            <person name="Glaser P."/>
            <person name="Goffeau A."/>
            <person name="Golightly E.J."/>
            <person name="Grandi G."/>
            <person name="Guiseppi G."/>
            <person name="Guy B.J."/>
            <person name="Haga K."/>
            <person name="Haiech J."/>
            <person name="Harwood C.R."/>
            <person name="Henaut A."/>
            <person name="Hilbert H."/>
            <person name="Holsappel S."/>
            <person name="Hosono S."/>
            <person name="Hullo M.-F."/>
            <person name="Itaya M."/>
            <person name="Jones L.-M."/>
            <person name="Joris B."/>
            <person name="Karamata D."/>
            <person name="Kasahara Y."/>
            <person name="Klaerr-Blanchard M."/>
            <person name="Klein C."/>
            <person name="Kobayashi Y."/>
            <person name="Koetter P."/>
            <person name="Koningstein G."/>
            <person name="Krogh S."/>
            <person name="Kumano M."/>
            <person name="Kurita K."/>
            <person name="Lapidus A."/>
            <person name="Lardinois S."/>
            <person name="Lauber J."/>
            <person name="Lazarevic V."/>
            <person name="Lee S.-M."/>
            <person name="Levine A."/>
            <person name="Liu H."/>
            <person name="Masuda S."/>
            <person name="Mauel C."/>
            <person name="Medigue C."/>
            <person name="Medina N."/>
            <person name="Mellado R.P."/>
            <person name="Mizuno M."/>
            <person name="Moestl D."/>
            <person name="Nakai S."/>
            <person name="Noback M."/>
            <person name="Noone D."/>
            <person name="O'Reilly M."/>
            <person name="Ogawa K."/>
            <person name="Ogiwara A."/>
            <person name="Oudega B."/>
            <person name="Park S.-H."/>
            <person name="Parro V."/>
            <person name="Pohl T.M."/>
            <person name="Portetelle D."/>
            <person name="Porwollik S."/>
            <person name="Prescott A.M."/>
            <person name="Presecan E."/>
            <person name="Pujic P."/>
            <person name="Purnelle B."/>
            <person name="Rapoport G."/>
            <person name="Rey M."/>
            <person name="Reynolds S."/>
            <person name="Rieger M."/>
            <person name="Rivolta C."/>
            <person name="Rocha E."/>
            <person name="Roche B."/>
            <person name="Rose M."/>
            <person name="Sadaie Y."/>
            <person name="Sato T."/>
            <person name="Scanlan E."/>
            <person name="Schleich S."/>
            <person name="Schroeter R."/>
            <person name="Scoffone F."/>
            <person name="Sekiguchi J."/>
            <person name="Sekowska A."/>
            <person name="Seror S.J."/>
            <person name="Serror P."/>
            <person name="Shin B.-S."/>
            <person name="Soldo B."/>
            <person name="Sorokin A."/>
            <person name="Tacconi E."/>
            <person name="Takagi T."/>
            <person name="Takahashi H."/>
            <person name="Takemaru K."/>
            <person name="Takeuchi M."/>
            <person name="Tamakoshi A."/>
            <person name="Tanaka T."/>
            <person name="Terpstra P."/>
            <person name="Tognoni A."/>
            <person name="Tosato V."/>
            <person name="Uchiyama S."/>
            <person name="Vandenbol M."/>
            <person name="Vannier F."/>
            <person name="Vassarotti A."/>
            <person name="Viari A."/>
            <person name="Wambutt R."/>
            <person name="Wedler E."/>
            <person name="Wedler H."/>
            <person name="Weitzenegger T."/>
            <person name="Winters P."/>
            <person name="Wipat A."/>
            <person name="Yamamoto H."/>
            <person name="Yamane K."/>
            <person name="Yasumoto K."/>
            <person name="Yata K."/>
            <person name="Yoshida K."/>
            <person name="Yoshikawa H.-F."/>
            <person name="Zumstein E."/>
            <person name="Yoshikawa H."/>
            <person name="Danchin A."/>
        </authorList>
    </citation>
    <scope>NUCLEOTIDE SEQUENCE [LARGE SCALE GENOMIC DNA]</scope>
    <source>
        <strain>168</strain>
    </source>
</reference>
<reference key="3">
    <citation type="journal article" date="1999" name="J. Biol. Chem.">
        <title>Bacillus subtilis contains two small c-type cytochromes with homologous heme domains but different types of membrane anchors.</title>
        <authorList>
            <person name="Bengtsson J."/>
            <person name="Rivolta C."/>
            <person name="Hederstedt L."/>
            <person name="Karamata D."/>
        </authorList>
    </citation>
    <scope>FUNCTION AS CYTOCHROME</scope>
    <scope>SUBCELLULAR LOCATION</scope>
    <scope>INDUCTION</scope>
    <source>
        <strain>168</strain>
    </source>
</reference>
<sequence>MKSKLSILMIGFALSVLLAACGSNDAKEEKTDTGSKTEATASEGEELYQQSCVGCHGKDLEGVSGPNLQEVGGKYDEHKIESIIKNGRGNMPKGLVDDNEAAVIAKWLSEKK</sequence>
<keyword id="KW-1003">Cell membrane</keyword>
<keyword id="KW-0249">Electron transport</keyword>
<keyword id="KW-0349">Heme</keyword>
<keyword id="KW-0408">Iron</keyword>
<keyword id="KW-0449">Lipoprotein</keyword>
<keyword id="KW-0472">Membrane</keyword>
<keyword id="KW-0479">Metal-binding</keyword>
<keyword id="KW-0564">Palmitate</keyword>
<keyword id="KW-1185">Reference proteome</keyword>
<keyword id="KW-0732">Signal</keyword>
<keyword id="KW-0813">Transport</keyword>
<name>CY551_BACSU</name>